<proteinExistence type="inferred from homology"/>
<reference key="1">
    <citation type="journal article" date="2009" name="Proc. Natl. Acad. Sci. U.S.A.">
        <title>Biogeography of the Sulfolobus islandicus pan-genome.</title>
        <authorList>
            <person name="Reno M.L."/>
            <person name="Held N.L."/>
            <person name="Fields C.J."/>
            <person name="Burke P.V."/>
            <person name="Whitaker R.J."/>
        </authorList>
    </citation>
    <scope>NUCLEOTIDE SEQUENCE [LARGE SCALE GENOMIC DNA]</scope>
    <source>
        <strain>M.16.4 / Kamchatka #3</strain>
    </source>
</reference>
<organism>
    <name type="scientific">Saccharolobus islandicus (strain M.16.4 / Kamchatka #3)</name>
    <name type="common">Sulfolobus islandicus</name>
    <dbReference type="NCBI Taxonomy" id="426118"/>
    <lineage>
        <taxon>Archaea</taxon>
        <taxon>Thermoproteota</taxon>
        <taxon>Thermoprotei</taxon>
        <taxon>Sulfolobales</taxon>
        <taxon>Sulfolobaceae</taxon>
        <taxon>Saccharolobus</taxon>
    </lineage>
</organism>
<gene>
    <name type="ordered locus">M164_1691</name>
</gene>
<name>KAD6_SACI6</name>
<comment type="function">
    <text evidence="1">Broad-specificity nucleoside monophosphate (NMP) kinase that catalyzes the reversible transfer of the terminal phosphate group between nucleoside triphosphates and monophosphates. Also has ATPase activity. Involved in the late maturation steps of the 30S ribosomal particles, specifically 16S rRNA maturation. While NMP activity is not required for ribosome maturation, ATPase activity is. Associates transiently with small ribosomal subunit protein uS11. ATP hydrolysis breaks the interaction with uS11. May temporarily remove uS11 from the ribosome to enable a conformational change of the ribosomal RNA that is needed for the final maturation step of the small ribosomal subunit.</text>
</comment>
<comment type="catalytic activity">
    <reaction evidence="1">
        <text>AMP + ATP = 2 ADP</text>
        <dbReference type="Rhea" id="RHEA:12973"/>
        <dbReference type="ChEBI" id="CHEBI:30616"/>
        <dbReference type="ChEBI" id="CHEBI:456215"/>
        <dbReference type="ChEBI" id="CHEBI:456216"/>
        <dbReference type="EC" id="2.7.4.3"/>
    </reaction>
</comment>
<comment type="catalytic activity">
    <reaction evidence="1">
        <text>ATP + H2O = ADP + phosphate + H(+)</text>
        <dbReference type="Rhea" id="RHEA:13065"/>
        <dbReference type="ChEBI" id="CHEBI:15377"/>
        <dbReference type="ChEBI" id="CHEBI:15378"/>
        <dbReference type="ChEBI" id="CHEBI:30616"/>
        <dbReference type="ChEBI" id="CHEBI:43474"/>
        <dbReference type="ChEBI" id="CHEBI:456216"/>
    </reaction>
</comment>
<comment type="subunit">
    <text evidence="1">Interacts with uS11. Not a structural component of 40S pre-ribosomes, but transiently interacts with them by binding to uS11.</text>
</comment>
<comment type="similarity">
    <text evidence="1">Belongs to the adenylate kinase family. AK6 subfamily.</text>
</comment>
<dbReference type="EC" id="2.7.4.3" evidence="1"/>
<dbReference type="EMBL" id="CP001402">
    <property type="protein sequence ID" value="ACR42295.1"/>
    <property type="molecule type" value="Genomic_DNA"/>
</dbReference>
<dbReference type="RefSeq" id="WP_010922979.1">
    <property type="nucleotide sequence ID" value="NC_012726.1"/>
</dbReference>
<dbReference type="SMR" id="C4KI81"/>
<dbReference type="KEGG" id="sid:M164_1691"/>
<dbReference type="HOGENOM" id="CLU_079096_3_1_2"/>
<dbReference type="Proteomes" id="UP000001479">
    <property type="component" value="Chromosome"/>
</dbReference>
<dbReference type="GO" id="GO:0004017">
    <property type="term" value="F:adenylate kinase activity"/>
    <property type="evidence" value="ECO:0007669"/>
    <property type="project" value="UniProtKB-UniRule"/>
</dbReference>
<dbReference type="GO" id="GO:0005524">
    <property type="term" value="F:ATP binding"/>
    <property type="evidence" value="ECO:0007669"/>
    <property type="project" value="UniProtKB-UniRule"/>
</dbReference>
<dbReference type="GO" id="GO:0016887">
    <property type="term" value="F:ATP hydrolysis activity"/>
    <property type="evidence" value="ECO:0007669"/>
    <property type="project" value="InterPro"/>
</dbReference>
<dbReference type="GO" id="GO:0042274">
    <property type="term" value="P:ribosomal small subunit biogenesis"/>
    <property type="evidence" value="ECO:0007669"/>
    <property type="project" value="UniProtKB-UniRule"/>
</dbReference>
<dbReference type="GO" id="GO:0006364">
    <property type="term" value="P:rRNA processing"/>
    <property type="evidence" value="ECO:0007669"/>
    <property type="project" value="UniProtKB-KW"/>
</dbReference>
<dbReference type="Gene3D" id="3.40.50.300">
    <property type="entry name" value="P-loop containing nucleotide triphosphate hydrolases"/>
    <property type="match status" value="1"/>
</dbReference>
<dbReference type="HAMAP" id="MF_00039">
    <property type="entry name" value="Adenylate_kinase_AK6"/>
    <property type="match status" value="1"/>
</dbReference>
<dbReference type="InterPro" id="IPR020618">
    <property type="entry name" value="Adenyl_kinase_AK6"/>
</dbReference>
<dbReference type="InterPro" id="IPR027417">
    <property type="entry name" value="P-loop_NTPase"/>
</dbReference>
<dbReference type="PANTHER" id="PTHR12595:SF0">
    <property type="entry name" value="ADENYLATE KINASE ISOENZYME 6"/>
    <property type="match status" value="1"/>
</dbReference>
<dbReference type="PANTHER" id="PTHR12595">
    <property type="entry name" value="POS9-ACTIVATING FACTOR FAP7-RELATED"/>
    <property type="match status" value="1"/>
</dbReference>
<dbReference type="Pfam" id="PF13238">
    <property type="entry name" value="AAA_18"/>
    <property type="match status" value="1"/>
</dbReference>
<dbReference type="SUPFAM" id="SSF52540">
    <property type="entry name" value="P-loop containing nucleoside triphosphate hydrolases"/>
    <property type="match status" value="1"/>
</dbReference>
<feature type="chain" id="PRO_1000202083" description="Putative adenylate kinase">
    <location>
        <begin position="1"/>
        <end position="187"/>
    </location>
</feature>
<feature type="region of interest" description="NMP" evidence="1">
    <location>
        <begin position="30"/>
        <end position="53"/>
    </location>
</feature>
<feature type="region of interest" description="LID" evidence="1">
    <location>
        <begin position="103"/>
        <end position="113"/>
    </location>
</feature>
<feature type="binding site" evidence="1">
    <location>
        <position position="10"/>
    </location>
    <ligand>
        <name>ATP</name>
        <dbReference type="ChEBI" id="CHEBI:30616"/>
    </ligand>
</feature>
<feature type="binding site" evidence="1">
    <location>
        <position position="12"/>
    </location>
    <ligand>
        <name>ATP</name>
        <dbReference type="ChEBI" id="CHEBI:30616"/>
    </ligand>
</feature>
<feature type="binding site" evidence="1">
    <location>
        <position position="13"/>
    </location>
    <ligand>
        <name>ATP</name>
        <dbReference type="ChEBI" id="CHEBI:30616"/>
    </ligand>
</feature>
<feature type="binding site" evidence="1">
    <location>
        <position position="14"/>
    </location>
    <ligand>
        <name>ATP</name>
        <dbReference type="ChEBI" id="CHEBI:30616"/>
    </ligand>
</feature>
<feature type="binding site" evidence="1">
    <location>
        <position position="15"/>
    </location>
    <ligand>
        <name>ATP</name>
        <dbReference type="ChEBI" id="CHEBI:30616"/>
    </ligand>
</feature>
<feature type="binding site" evidence="1">
    <location>
        <position position="104"/>
    </location>
    <ligand>
        <name>ATP</name>
        <dbReference type="ChEBI" id="CHEBI:30616"/>
    </ligand>
</feature>
<accession>C4KI81</accession>
<protein>
    <recommendedName>
        <fullName evidence="1">Putative adenylate kinase</fullName>
        <shortName evidence="1">AK</shortName>
        <ecNumber evidence="1">2.7.4.3</ecNumber>
    </recommendedName>
    <alternativeName>
        <fullName evidence="1">ATP-AMP transphosphorylase</fullName>
    </alternativeName>
</protein>
<keyword id="KW-0067">ATP-binding</keyword>
<keyword id="KW-0418">Kinase</keyword>
<keyword id="KW-0547">Nucleotide-binding</keyword>
<keyword id="KW-0690">Ribosome biogenesis</keyword>
<keyword id="KW-0698">rRNA processing</keyword>
<keyword id="KW-0808">Transferase</keyword>
<evidence type="ECO:0000255" key="1">
    <source>
        <dbReference type="HAMAP-Rule" id="MF_00039"/>
    </source>
</evidence>
<sequence length="187" mass="21247">MIIIVTGTPGVGKTVASKKLSEALNLNYLSLSQFVIENKLYTEYDELRQSYIIDEDKVKEELEKIISTSHLVIETIYPSLVSTADLVVVLRKNPFSLYNELKGRGWADIKVAENVEAEILGVISQEAREAFKDKVCEVDTTEMSTEQILNKILNKQCDGPIEWLVDTKVQRFLEELDKIISSYENDI</sequence>